<feature type="chain" id="PRO_1000148825" description="Undecaprenyl-diphosphatase">
    <location>
        <begin position="1"/>
        <end position="266"/>
    </location>
</feature>
<feature type="transmembrane region" description="Helical" evidence="1">
    <location>
        <begin position="1"/>
        <end position="21"/>
    </location>
</feature>
<feature type="transmembrane region" description="Helical" evidence="1">
    <location>
        <begin position="39"/>
        <end position="59"/>
    </location>
</feature>
<feature type="transmembrane region" description="Helical" evidence="1">
    <location>
        <begin position="87"/>
        <end position="107"/>
    </location>
</feature>
<feature type="transmembrane region" description="Helical" evidence="1">
    <location>
        <begin position="114"/>
        <end position="134"/>
    </location>
</feature>
<feature type="transmembrane region" description="Helical" evidence="1">
    <location>
        <begin position="149"/>
        <end position="169"/>
    </location>
</feature>
<feature type="transmembrane region" description="Helical" evidence="1">
    <location>
        <begin position="183"/>
        <end position="203"/>
    </location>
</feature>
<feature type="transmembrane region" description="Helical" evidence="1">
    <location>
        <begin position="218"/>
        <end position="238"/>
    </location>
</feature>
<feature type="transmembrane region" description="Helical" evidence="1">
    <location>
        <begin position="246"/>
        <end position="266"/>
    </location>
</feature>
<comment type="function">
    <text evidence="1">Catalyzes the dephosphorylation of undecaprenyl diphosphate (UPP). Confers resistance to bacitracin.</text>
</comment>
<comment type="catalytic activity">
    <reaction evidence="1">
        <text>di-trans,octa-cis-undecaprenyl diphosphate + H2O = di-trans,octa-cis-undecaprenyl phosphate + phosphate + H(+)</text>
        <dbReference type="Rhea" id="RHEA:28094"/>
        <dbReference type="ChEBI" id="CHEBI:15377"/>
        <dbReference type="ChEBI" id="CHEBI:15378"/>
        <dbReference type="ChEBI" id="CHEBI:43474"/>
        <dbReference type="ChEBI" id="CHEBI:58405"/>
        <dbReference type="ChEBI" id="CHEBI:60392"/>
        <dbReference type="EC" id="3.6.1.27"/>
    </reaction>
</comment>
<comment type="subcellular location">
    <subcellularLocation>
        <location evidence="1">Cell inner membrane</location>
        <topology evidence="1">Multi-pass membrane protein</topology>
    </subcellularLocation>
</comment>
<comment type="miscellaneous">
    <text>Bacitracin is thought to be involved in the inhibition of peptidoglycan synthesis by sequestering undecaprenyl diphosphate, thereby reducing the pool of lipid carrier available.</text>
</comment>
<comment type="similarity">
    <text evidence="1">Belongs to the UppP family.</text>
</comment>
<organism>
    <name type="scientific">Shewanella baltica (strain OS223)</name>
    <dbReference type="NCBI Taxonomy" id="407976"/>
    <lineage>
        <taxon>Bacteria</taxon>
        <taxon>Pseudomonadati</taxon>
        <taxon>Pseudomonadota</taxon>
        <taxon>Gammaproteobacteria</taxon>
        <taxon>Alteromonadales</taxon>
        <taxon>Shewanellaceae</taxon>
        <taxon>Shewanella</taxon>
    </lineage>
</organism>
<dbReference type="EC" id="3.6.1.27" evidence="1"/>
<dbReference type="EMBL" id="CP001252">
    <property type="protein sequence ID" value="ACK47646.1"/>
    <property type="molecule type" value="Genomic_DNA"/>
</dbReference>
<dbReference type="RefSeq" id="WP_006080730.1">
    <property type="nucleotide sequence ID" value="NC_011663.1"/>
</dbReference>
<dbReference type="SMR" id="B8EBV1"/>
<dbReference type="KEGG" id="sbp:Sbal223_3161"/>
<dbReference type="HOGENOM" id="CLU_060296_1_0_6"/>
<dbReference type="Proteomes" id="UP000002507">
    <property type="component" value="Chromosome"/>
</dbReference>
<dbReference type="GO" id="GO:0005886">
    <property type="term" value="C:plasma membrane"/>
    <property type="evidence" value="ECO:0007669"/>
    <property type="project" value="UniProtKB-SubCell"/>
</dbReference>
<dbReference type="GO" id="GO:0050380">
    <property type="term" value="F:undecaprenyl-diphosphatase activity"/>
    <property type="evidence" value="ECO:0007669"/>
    <property type="project" value="UniProtKB-UniRule"/>
</dbReference>
<dbReference type="GO" id="GO:0071555">
    <property type="term" value="P:cell wall organization"/>
    <property type="evidence" value="ECO:0007669"/>
    <property type="project" value="UniProtKB-KW"/>
</dbReference>
<dbReference type="GO" id="GO:0009252">
    <property type="term" value="P:peptidoglycan biosynthetic process"/>
    <property type="evidence" value="ECO:0007669"/>
    <property type="project" value="UniProtKB-KW"/>
</dbReference>
<dbReference type="GO" id="GO:0008360">
    <property type="term" value="P:regulation of cell shape"/>
    <property type="evidence" value="ECO:0007669"/>
    <property type="project" value="UniProtKB-KW"/>
</dbReference>
<dbReference type="GO" id="GO:0046677">
    <property type="term" value="P:response to antibiotic"/>
    <property type="evidence" value="ECO:0007669"/>
    <property type="project" value="UniProtKB-UniRule"/>
</dbReference>
<dbReference type="HAMAP" id="MF_01006">
    <property type="entry name" value="Undec_diphosphatase"/>
    <property type="match status" value="1"/>
</dbReference>
<dbReference type="InterPro" id="IPR003824">
    <property type="entry name" value="UppP"/>
</dbReference>
<dbReference type="NCBIfam" id="NF001393">
    <property type="entry name" value="PRK00281.2-4"/>
    <property type="match status" value="1"/>
</dbReference>
<dbReference type="NCBIfam" id="TIGR00753">
    <property type="entry name" value="undec_PP_bacA"/>
    <property type="match status" value="1"/>
</dbReference>
<dbReference type="PANTHER" id="PTHR30622">
    <property type="entry name" value="UNDECAPRENYL-DIPHOSPHATASE"/>
    <property type="match status" value="1"/>
</dbReference>
<dbReference type="PANTHER" id="PTHR30622:SF4">
    <property type="entry name" value="UNDECAPRENYL-DIPHOSPHATASE"/>
    <property type="match status" value="1"/>
</dbReference>
<dbReference type="Pfam" id="PF02673">
    <property type="entry name" value="BacA"/>
    <property type="match status" value="1"/>
</dbReference>
<reference key="1">
    <citation type="submission" date="2008-12" db="EMBL/GenBank/DDBJ databases">
        <title>Complete sequence of chromosome of Shewanella baltica OS223.</title>
        <authorList>
            <consortium name="US DOE Joint Genome Institute"/>
            <person name="Lucas S."/>
            <person name="Copeland A."/>
            <person name="Lapidus A."/>
            <person name="Glavina del Rio T."/>
            <person name="Dalin E."/>
            <person name="Tice H."/>
            <person name="Bruce D."/>
            <person name="Goodwin L."/>
            <person name="Pitluck S."/>
            <person name="Chertkov O."/>
            <person name="Meincke L."/>
            <person name="Brettin T."/>
            <person name="Detter J.C."/>
            <person name="Han C."/>
            <person name="Kuske C.R."/>
            <person name="Larimer F."/>
            <person name="Land M."/>
            <person name="Hauser L."/>
            <person name="Kyrpides N."/>
            <person name="Ovchinnikova G."/>
            <person name="Brettar I."/>
            <person name="Rodrigues J."/>
            <person name="Konstantinidis K."/>
            <person name="Tiedje J."/>
        </authorList>
    </citation>
    <scope>NUCLEOTIDE SEQUENCE [LARGE SCALE GENOMIC DNA]</scope>
    <source>
        <strain>OS223</strain>
    </source>
</reference>
<protein>
    <recommendedName>
        <fullName evidence="1">Undecaprenyl-diphosphatase</fullName>
        <ecNumber evidence="1">3.6.1.27</ecNumber>
    </recommendedName>
    <alternativeName>
        <fullName evidence="1">Bacitracin resistance protein</fullName>
    </alternativeName>
    <alternativeName>
        <fullName evidence="1">Undecaprenyl pyrophosphate phosphatase</fullName>
    </alternativeName>
</protein>
<gene>
    <name evidence="1" type="primary">uppP</name>
    <name type="ordered locus">Sbal223_3161</name>
</gene>
<name>UPPP_SHEB2</name>
<sequence>MDTFQVIILALIQGLTEFLPISSSAHLILPAQLLGWEDQGLSFDVAVNTGSLFAVVIYFRHELWTMFNAWIASIFRGQQSEDSKLAWWIILATLPAVFFGFLAKDFIATHLRNAEVIAVTTVVFGLLLWWADKMSRRDLTVYQTGWRKALLIGFAQALALIPGTSRSGATMTAALMLGLSRDAAARFSFLMSVPVSLGAAILVGKDLAKSELPIDYQALILGTLISFVAAYACIHYFLKIISRMGMTPFVIYRLALGAVLCGFIFF</sequence>
<evidence type="ECO:0000255" key="1">
    <source>
        <dbReference type="HAMAP-Rule" id="MF_01006"/>
    </source>
</evidence>
<accession>B8EBV1</accession>
<keyword id="KW-0046">Antibiotic resistance</keyword>
<keyword id="KW-0997">Cell inner membrane</keyword>
<keyword id="KW-1003">Cell membrane</keyword>
<keyword id="KW-0133">Cell shape</keyword>
<keyword id="KW-0961">Cell wall biogenesis/degradation</keyword>
<keyword id="KW-0378">Hydrolase</keyword>
<keyword id="KW-0472">Membrane</keyword>
<keyword id="KW-0573">Peptidoglycan synthesis</keyword>
<keyword id="KW-0812">Transmembrane</keyword>
<keyword id="KW-1133">Transmembrane helix</keyword>
<proteinExistence type="inferred from homology"/>